<name>INS_CHICH</name>
<evidence type="ECO:0000250" key="1"/>
<evidence type="ECO:0000305" key="2"/>
<feature type="peptide" id="PRO_0000015788" description="Insulin B chain">
    <location>
        <begin position="1"/>
        <end position="30"/>
    </location>
</feature>
<feature type="propeptide" id="PRO_0000043180" description="C peptide">
    <location>
        <begin position="33"/>
        <end position="63"/>
    </location>
</feature>
<feature type="peptide" id="PRO_0000015789" description="Insulin A chain">
    <location>
        <begin position="66"/>
        <end position="86"/>
    </location>
</feature>
<feature type="disulfide bond" description="Interchain (between B and A chains)" evidence="1">
    <location>
        <begin position="7"/>
        <end position="72"/>
    </location>
</feature>
<feature type="disulfide bond" description="Interchain (between B and A chains)" evidence="1">
    <location>
        <begin position="19"/>
        <end position="85"/>
    </location>
</feature>
<feature type="disulfide bond" evidence="1">
    <location>
        <begin position="71"/>
        <end position="76"/>
    </location>
</feature>
<keyword id="KW-0119">Carbohydrate metabolism</keyword>
<keyword id="KW-0903">Direct protein sequencing</keyword>
<keyword id="KW-1015">Disulfide bond</keyword>
<keyword id="KW-0313">Glucose metabolism</keyword>
<keyword id="KW-0372">Hormone</keyword>
<keyword id="KW-0964">Secreted</keyword>
<organism>
    <name type="scientific">Chinchilla chinchilla</name>
    <name type="common">Short-tailed chinchilla</name>
    <name type="synonym">Chinchilla brevicaudata</name>
    <dbReference type="NCBI Taxonomy" id="10152"/>
    <lineage>
        <taxon>Eukaryota</taxon>
        <taxon>Metazoa</taxon>
        <taxon>Chordata</taxon>
        <taxon>Craniata</taxon>
        <taxon>Vertebrata</taxon>
        <taxon>Euteleostomi</taxon>
        <taxon>Mammalia</taxon>
        <taxon>Eutheria</taxon>
        <taxon>Euarchontoglires</taxon>
        <taxon>Glires</taxon>
        <taxon>Rodentia</taxon>
        <taxon>Hystricomorpha</taxon>
        <taxon>Chinchillidae</taxon>
        <taxon>Chinchilla</taxon>
    </lineage>
</organism>
<reference key="1">
    <citation type="journal article" date="1975" name="Eur. J. Biochem.">
        <title>The relation of conformation and association of insulin to receptor binding; X-ray and circular-dichroism studies on bovine and hystricomorph insulins.</title>
        <authorList>
            <person name="Wood S.P."/>
            <person name="Blundell T.L."/>
            <person name="Wollmer A."/>
            <person name="Lazarus N.R."/>
            <person name="Neville R.W.J."/>
        </authorList>
    </citation>
    <scope>PROTEIN SEQUENCE OF 1-30 AND 66-86</scope>
</reference>
<reference key="2">
    <citation type="journal article" date="1975" name="J. Biol. Chem.">
        <title>Proinsulin: a proposed three-dimensional structure.</title>
        <authorList>
            <person name="Snell C.R."/>
            <person name="Smyth D.G."/>
        </authorList>
    </citation>
    <scope>PROTEIN SEQUENCE OF 33-63</scope>
</reference>
<accession>P01327</accession>
<sequence length="86" mass="9470">FVNKHLCGSHLVDALYLVCGDRGFFYTPMAXXELEDPQVGQADPGVVPEAGRLQPLALEMTLQXXGIVDQCCTSICTLYQLENYCN</sequence>
<protein>
    <recommendedName>
        <fullName>Insulin</fullName>
    </recommendedName>
    <component>
        <recommendedName>
            <fullName>Insulin B chain</fullName>
        </recommendedName>
    </component>
    <component>
        <recommendedName>
            <fullName>Insulin A chain</fullName>
        </recommendedName>
    </component>
</protein>
<comment type="function">
    <text>Insulin decreases blood glucose concentration. It increases cell permeability to monosaccharides, amino acids and fatty acids. It accelerates glycolysis, the pentose phosphate cycle, and glycogen synthesis in liver.</text>
</comment>
<comment type="subunit">
    <text>Heterodimer of a B chain and an A chain linked by two disulfide bonds.</text>
</comment>
<comment type="subcellular location">
    <subcellularLocation>
        <location>Secreted</location>
    </subcellularLocation>
</comment>
<comment type="similarity">
    <text evidence="2">Belongs to the insulin family.</text>
</comment>
<comment type="caution">
    <text evidence="2">X's at positions 31-32 and 64-65 represent paired basic residues assumed by homology to be present in the precursor molecule.</text>
</comment>
<gene>
    <name type="primary">INS</name>
</gene>
<proteinExistence type="evidence at protein level"/>
<dbReference type="PIR" id="A01593">
    <property type="entry name" value="INCB"/>
</dbReference>
<dbReference type="GO" id="GO:0005615">
    <property type="term" value="C:extracellular space"/>
    <property type="evidence" value="ECO:0007669"/>
    <property type="project" value="TreeGrafter"/>
</dbReference>
<dbReference type="GO" id="GO:0005179">
    <property type="term" value="F:hormone activity"/>
    <property type="evidence" value="ECO:0007669"/>
    <property type="project" value="UniProtKB-KW"/>
</dbReference>
<dbReference type="GO" id="GO:1901701">
    <property type="term" value="P:cellular response to oxygen-containing compound"/>
    <property type="evidence" value="ECO:0007669"/>
    <property type="project" value="UniProtKB-ARBA"/>
</dbReference>
<dbReference type="GO" id="GO:0042593">
    <property type="term" value="P:glucose homeostasis"/>
    <property type="evidence" value="ECO:0007669"/>
    <property type="project" value="TreeGrafter"/>
</dbReference>
<dbReference type="GO" id="GO:0006006">
    <property type="term" value="P:glucose metabolic process"/>
    <property type="evidence" value="ECO:0007669"/>
    <property type="project" value="UniProtKB-KW"/>
</dbReference>
<dbReference type="GO" id="GO:0050714">
    <property type="term" value="P:positive regulation of protein secretion"/>
    <property type="evidence" value="ECO:0007669"/>
    <property type="project" value="TreeGrafter"/>
</dbReference>
<dbReference type="CDD" id="cd04367">
    <property type="entry name" value="IlGF_insulin_like"/>
    <property type="match status" value="1"/>
</dbReference>
<dbReference type="FunFam" id="1.10.100.10:FF:000003">
    <property type="entry name" value="Insulin"/>
    <property type="match status" value="1"/>
</dbReference>
<dbReference type="Gene3D" id="1.10.100.10">
    <property type="entry name" value="Insulin-like"/>
    <property type="match status" value="1"/>
</dbReference>
<dbReference type="InterPro" id="IPR004825">
    <property type="entry name" value="Insulin"/>
</dbReference>
<dbReference type="InterPro" id="IPR016179">
    <property type="entry name" value="Insulin-like"/>
</dbReference>
<dbReference type="InterPro" id="IPR036438">
    <property type="entry name" value="Insulin-like_sf"/>
</dbReference>
<dbReference type="InterPro" id="IPR022353">
    <property type="entry name" value="Insulin_CS"/>
</dbReference>
<dbReference type="InterPro" id="IPR022352">
    <property type="entry name" value="Insulin_family"/>
</dbReference>
<dbReference type="PANTHER" id="PTHR11454:SF9">
    <property type="entry name" value="INSULIN"/>
    <property type="match status" value="1"/>
</dbReference>
<dbReference type="PANTHER" id="PTHR11454">
    <property type="entry name" value="INSULIN/INSULIN GROWTH FACTOR"/>
    <property type="match status" value="1"/>
</dbReference>
<dbReference type="Pfam" id="PF00049">
    <property type="entry name" value="Insulin"/>
    <property type="match status" value="1"/>
</dbReference>
<dbReference type="PRINTS" id="PR00277">
    <property type="entry name" value="INSULIN"/>
</dbReference>
<dbReference type="PRINTS" id="PR00276">
    <property type="entry name" value="INSULINFAMLY"/>
</dbReference>
<dbReference type="SMART" id="SM00078">
    <property type="entry name" value="IlGF"/>
    <property type="match status" value="1"/>
</dbReference>
<dbReference type="SUPFAM" id="SSF56994">
    <property type="entry name" value="Insulin-like"/>
    <property type="match status" value="1"/>
</dbReference>
<dbReference type="PROSITE" id="PS00262">
    <property type="entry name" value="INSULIN"/>
    <property type="match status" value="1"/>
</dbReference>